<comment type="function">
    <text evidence="1">mRNA decapping enzyme that specifically removes the nicotinamide adenine dinucleotide (NAD) cap from a subset of mRNAs by hydrolyzing the diphosphate linkage to produce nicotinamide mononucleotide (NMN) and 5' monophosphate mRNA. The NAD-cap is present at the 5'-end of some mRNAs and stabilizes RNA against 5'-processing. Has preference for mRNAs with a 5'-end purine. Catalyzes the hydrolysis of a broad range of dinucleotide pyrophosphates.</text>
</comment>
<comment type="catalytic activity">
    <reaction evidence="1">
        <text>a 5'-end NAD(+)-phospho-ribonucleoside in mRNA + H2O = a 5'-end phospho-adenosine-phospho-ribonucleoside in mRNA + beta-nicotinamide D-ribonucleotide + 2 H(+)</text>
        <dbReference type="Rhea" id="RHEA:60876"/>
        <dbReference type="Rhea" id="RHEA-COMP:15698"/>
        <dbReference type="Rhea" id="RHEA-COMP:15719"/>
        <dbReference type="ChEBI" id="CHEBI:14649"/>
        <dbReference type="ChEBI" id="CHEBI:15377"/>
        <dbReference type="ChEBI" id="CHEBI:15378"/>
        <dbReference type="ChEBI" id="CHEBI:144029"/>
        <dbReference type="ChEBI" id="CHEBI:144051"/>
    </reaction>
    <physiologicalReaction direction="left-to-right" evidence="1">
        <dbReference type="Rhea" id="RHEA:60877"/>
    </physiologicalReaction>
</comment>
<comment type="catalytic activity">
    <reaction evidence="1">
        <text>NAD(+) + H2O = beta-nicotinamide D-ribonucleotide + AMP + 2 H(+)</text>
        <dbReference type="Rhea" id="RHEA:11800"/>
        <dbReference type="ChEBI" id="CHEBI:14649"/>
        <dbReference type="ChEBI" id="CHEBI:15377"/>
        <dbReference type="ChEBI" id="CHEBI:15378"/>
        <dbReference type="ChEBI" id="CHEBI:57540"/>
        <dbReference type="ChEBI" id="CHEBI:456215"/>
        <dbReference type="EC" id="3.6.1.22"/>
    </reaction>
</comment>
<comment type="catalytic activity">
    <reaction evidence="1">
        <text>NADH + H2O = reduced beta-nicotinamide D-ribonucleotide + AMP + 2 H(+)</text>
        <dbReference type="Rhea" id="RHEA:48868"/>
        <dbReference type="ChEBI" id="CHEBI:15377"/>
        <dbReference type="ChEBI" id="CHEBI:15378"/>
        <dbReference type="ChEBI" id="CHEBI:57945"/>
        <dbReference type="ChEBI" id="CHEBI:90832"/>
        <dbReference type="ChEBI" id="CHEBI:456215"/>
        <dbReference type="EC" id="3.6.1.22"/>
    </reaction>
</comment>
<comment type="cofactor">
    <cofactor evidence="1">
        <name>Mg(2+)</name>
        <dbReference type="ChEBI" id="CHEBI:18420"/>
    </cofactor>
    <cofactor evidence="1">
        <name>Mn(2+)</name>
        <dbReference type="ChEBI" id="CHEBI:29035"/>
    </cofactor>
    <text evidence="1">Divalent metal cations. Mg(2+) or Mn(2+).</text>
</comment>
<comment type="cofactor">
    <cofactor evidence="1">
        <name>Zn(2+)</name>
        <dbReference type="ChEBI" id="CHEBI:29105"/>
    </cofactor>
    <text evidence="1">Binds 1 zinc ion per subunit.</text>
</comment>
<comment type="subunit">
    <text evidence="1">Homodimer.</text>
</comment>
<comment type="similarity">
    <text evidence="1">Belongs to the Nudix hydrolase family. NudC subfamily.</text>
</comment>
<evidence type="ECO:0000255" key="1">
    <source>
        <dbReference type="HAMAP-Rule" id="MF_00297"/>
    </source>
</evidence>
<gene>
    <name evidence="1" type="primary">nudC</name>
    <name type="ordered locus">Asuc_1981</name>
</gene>
<organism>
    <name type="scientific">Actinobacillus succinogenes (strain ATCC 55618 / DSM 22257 / CCUG 43843 / 130Z)</name>
    <dbReference type="NCBI Taxonomy" id="339671"/>
    <lineage>
        <taxon>Bacteria</taxon>
        <taxon>Pseudomonadati</taxon>
        <taxon>Pseudomonadota</taxon>
        <taxon>Gammaproteobacteria</taxon>
        <taxon>Pasteurellales</taxon>
        <taxon>Pasteurellaceae</taxon>
        <taxon>Actinobacillus</taxon>
    </lineage>
</organism>
<proteinExistence type="inferred from homology"/>
<reference key="1">
    <citation type="journal article" date="2010" name="BMC Genomics">
        <title>A genomic perspective on the potential of Actinobacillus succinogenes for industrial succinate production.</title>
        <authorList>
            <person name="McKinlay J.B."/>
            <person name="Laivenieks M."/>
            <person name="Schindler B.D."/>
            <person name="McKinlay A.A."/>
            <person name="Siddaramappa S."/>
            <person name="Challacombe J.F."/>
            <person name="Lowry S.R."/>
            <person name="Clum A."/>
            <person name="Lapidus A.L."/>
            <person name="Burkhart K.B."/>
            <person name="Harkins V."/>
            <person name="Vieille C."/>
        </authorList>
    </citation>
    <scope>NUCLEOTIDE SEQUENCE [LARGE SCALE GENOMIC DNA]</scope>
    <source>
        <strain>ATCC 55618 / DSM 22257 / CCUG 43843 / 130Z</strain>
    </source>
</reference>
<dbReference type="EC" id="3.6.1.-" evidence="1"/>
<dbReference type="EC" id="3.6.1.22" evidence="1"/>
<dbReference type="EMBL" id="CP000746">
    <property type="protein sequence ID" value="ABR75328.1"/>
    <property type="molecule type" value="Genomic_DNA"/>
</dbReference>
<dbReference type="RefSeq" id="WP_012073705.1">
    <property type="nucleotide sequence ID" value="NC_009655.1"/>
</dbReference>
<dbReference type="SMR" id="A6VQT1"/>
<dbReference type="STRING" id="339671.Asuc_1981"/>
<dbReference type="KEGG" id="asu:Asuc_1981"/>
<dbReference type="eggNOG" id="COG2816">
    <property type="taxonomic scope" value="Bacteria"/>
</dbReference>
<dbReference type="HOGENOM" id="CLU_037162_0_1_6"/>
<dbReference type="OrthoDB" id="9791656at2"/>
<dbReference type="Proteomes" id="UP000001114">
    <property type="component" value="Chromosome"/>
</dbReference>
<dbReference type="GO" id="GO:0005829">
    <property type="term" value="C:cytosol"/>
    <property type="evidence" value="ECO:0007669"/>
    <property type="project" value="TreeGrafter"/>
</dbReference>
<dbReference type="GO" id="GO:0000287">
    <property type="term" value="F:magnesium ion binding"/>
    <property type="evidence" value="ECO:0007669"/>
    <property type="project" value="UniProtKB-UniRule"/>
</dbReference>
<dbReference type="GO" id="GO:0030145">
    <property type="term" value="F:manganese ion binding"/>
    <property type="evidence" value="ECO:0007669"/>
    <property type="project" value="UniProtKB-UniRule"/>
</dbReference>
<dbReference type="GO" id="GO:0000210">
    <property type="term" value="F:NAD+ diphosphatase activity"/>
    <property type="evidence" value="ECO:0007669"/>
    <property type="project" value="UniProtKB-UniRule"/>
</dbReference>
<dbReference type="GO" id="GO:0035529">
    <property type="term" value="F:NADH pyrophosphatase activity"/>
    <property type="evidence" value="ECO:0007669"/>
    <property type="project" value="TreeGrafter"/>
</dbReference>
<dbReference type="GO" id="GO:0110153">
    <property type="term" value="F:RNA NAD-cap (NMN-forming) hydrolase activity"/>
    <property type="evidence" value="ECO:0007669"/>
    <property type="project" value="RHEA"/>
</dbReference>
<dbReference type="GO" id="GO:0008270">
    <property type="term" value="F:zinc ion binding"/>
    <property type="evidence" value="ECO:0007669"/>
    <property type="project" value="UniProtKB-UniRule"/>
</dbReference>
<dbReference type="GO" id="GO:0019677">
    <property type="term" value="P:NAD catabolic process"/>
    <property type="evidence" value="ECO:0007669"/>
    <property type="project" value="TreeGrafter"/>
</dbReference>
<dbReference type="GO" id="GO:0006734">
    <property type="term" value="P:NADH metabolic process"/>
    <property type="evidence" value="ECO:0007669"/>
    <property type="project" value="TreeGrafter"/>
</dbReference>
<dbReference type="GO" id="GO:0006742">
    <property type="term" value="P:NADP catabolic process"/>
    <property type="evidence" value="ECO:0007669"/>
    <property type="project" value="TreeGrafter"/>
</dbReference>
<dbReference type="CDD" id="cd03429">
    <property type="entry name" value="NUDIX_NADH_pyrophosphatase_Nudt13"/>
    <property type="match status" value="1"/>
</dbReference>
<dbReference type="FunFam" id="3.90.79.10:FF:000004">
    <property type="entry name" value="NADH pyrophosphatase"/>
    <property type="match status" value="1"/>
</dbReference>
<dbReference type="Gene3D" id="3.90.79.20">
    <property type="match status" value="1"/>
</dbReference>
<dbReference type="Gene3D" id="3.90.79.10">
    <property type="entry name" value="Nucleoside Triphosphate Pyrophosphohydrolase"/>
    <property type="match status" value="1"/>
</dbReference>
<dbReference type="HAMAP" id="MF_00297">
    <property type="entry name" value="Nudix_NudC"/>
    <property type="match status" value="1"/>
</dbReference>
<dbReference type="InterPro" id="IPR050241">
    <property type="entry name" value="NAD-cap_RNA_hydrolase_NudC"/>
</dbReference>
<dbReference type="InterPro" id="IPR049734">
    <property type="entry name" value="NudC-like_C"/>
</dbReference>
<dbReference type="InterPro" id="IPR015797">
    <property type="entry name" value="NUDIX_hydrolase-like_dom_sf"/>
</dbReference>
<dbReference type="InterPro" id="IPR020084">
    <property type="entry name" value="NUDIX_hydrolase_CS"/>
</dbReference>
<dbReference type="InterPro" id="IPR000086">
    <property type="entry name" value="NUDIX_hydrolase_dom"/>
</dbReference>
<dbReference type="InterPro" id="IPR022925">
    <property type="entry name" value="RNA_Hydrolase_NudC"/>
</dbReference>
<dbReference type="InterPro" id="IPR015376">
    <property type="entry name" value="Znr_NADH_PPase"/>
</dbReference>
<dbReference type="NCBIfam" id="NF001299">
    <property type="entry name" value="PRK00241.1"/>
    <property type="match status" value="1"/>
</dbReference>
<dbReference type="PANTHER" id="PTHR42904:SF6">
    <property type="entry name" value="NAD-CAPPED RNA HYDROLASE NUDT12"/>
    <property type="match status" value="1"/>
</dbReference>
<dbReference type="PANTHER" id="PTHR42904">
    <property type="entry name" value="NUDIX HYDROLASE, NUDC SUBFAMILY"/>
    <property type="match status" value="1"/>
</dbReference>
<dbReference type="Pfam" id="PF00293">
    <property type="entry name" value="NUDIX"/>
    <property type="match status" value="1"/>
</dbReference>
<dbReference type="Pfam" id="PF09297">
    <property type="entry name" value="Zn_ribbon_NUD"/>
    <property type="match status" value="1"/>
</dbReference>
<dbReference type="SUPFAM" id="SSF55811">
    <property type="entry name" value="Nudix"/>
    <property type="match status" value="2"/>
</dbReference>
<dbReference type="PROSITE" id="PS51462">
    <property type="entry name" value="NUDIX"/>
    <property type="match status" value="1"/>
</dbReference>
<dbReference type="PROSITE" id="PS00893">
    <property type="entry name" value="NUDIX_BOX"/>
    <property type="match status" value="1"/>
</dbReference>
<keyword id="KW-0378">Hydrolase</keyword>
<keyword id="KW-0460">Magnesium</keyword>
<keyword id="KW-0464">Manganese</keyword>
<keyword id="KW-0479">Metal-binding</keyword>
<keyword id="KW-0520">NAD</keyword>
<keyword id="KW-1185">Reference proteome</keyword>
<keyword id="KW-0862">Zinc</keyword>
<sequence length="264" mass="30328">MNAIQIQDCGFWLIHVNQDIYFPDNNLPFGTAESLNLTHRNAARIGEWEGYPLFVVKEDPAEQREWTALRSLLRLPEEKFYLLNRGVELNYFLKTHRRCGKCGHQTEMARDEWAVQCQNDACGYRTYPVICPSIIVAVRRGKEILLANHTRHMPKNGGSGMYTTLAGFVEIGESFEQTVEREVFEETGLKVKNIRYFGSQPWAFPNSQMVGFLADYDSGEIRLQEDELNDARWFHCDQPLPELPPEGTIALKLINATLNICRQA</sequence>
<accession>A6VQT1</accession>
<protein>
    <recommendedName>
        <fullName evidence="1">NAD-capped RNA hydrolase NudC</fullName>
        <shortName evidence="1">DeNADding enzyme NudC</shortName>
        <ecNumber evidence="1">3.6.1.-</ecNumber>
    </recommendedName>
    <alternativeName>
        <fullName evidence="1">NADH pyrophosphatase</fullName>
        <ecNumber evidence="1">3.6.1.22</ecNumber>
    </alternativeName>
</protein>
<name>NUDC_ACTSZ</name>
<feature type="chain" id="PRO_1000071957" description="NAD-capped RNA hydrolase NudC">
    <location>
        <begin position="1"/>
        <end position="264"/>
    </location>
</feature>
<feature type="domain" description="Nudix hydrolase" evidence="1">
    <location>
        <begin position="128"/>
        <end position="257"/>
    </location>
</feature>
<feature type="short sequence motif" description="Nudix box" evidence="1">
    <location>
        <begin position="167"/>
        <end position="188"/>
    </location>
</feature>
<feature type="binding site" evidence="1">
    <location>
        <position position="70"/>
    </location>
    <ligand>
        <name>substrate</name>
    </ligand>
</feature>
<feature type="binding site" evidence="1">
    <location>
        <position position="99"/>
    </location>
    <ligand>
        <name>Zn(2+)</name>
        <dbReference type="ChEBI" id="CHEBI:29105"/>
    </ligand>
</feature>
<feature type="binding site" evidence="1">
    <location>
        <position position="102"/>
    </location>
    <ligand>
        <name>Zn(2+)</name>
        <dbReference type="ChEBI" id="CHEBI:29105"/>
    </ligand>
</feature>
<feature type="binding site" evidence="1">
    <location>
        <position position="112"/>
    </location>
    <ligand>
        <name>substrate</name>
    </ligand>
</feature>
<feature type="binding site" evidence="1">
    <location>
        <position position="117"/>
    </location>
    <ligand>
        <name>Zn(2+)</name>
        <dbReference type="ChEBI" id="CHEBI:29105"/>
    </ligand>
</feature>
<feature type="binding site" evidence="1">
    <location>
        <position position="122"/>
    </location>
    <ligand>
        <name>Zn(2+)</name>
        <dbReference type="ChEBI" id="CHEBI:29105"/>
    </ligand>
</feature>
<feature type="binding site" evidence="1">
    <location>
        <position position="127"/>
    </location>
    <ligand>
        <name>substrate</name>
    </ligand>
</feature>
<feature type="binding site" evidence="1">
    <location>
        <position position="166"/>
    </location>
    <ligand>
        <name>a divalent metal cation</name>
        <dbReference type="ChEBI" id="CHEBI:60240"/>
        <label>1</label>
    </ligand>
</feature>
<feature type="binding site" evidence="1">
    <location>
        <position position="182"/>
    </location>
    <ligand>
        <name>a divalent metal cation</name>
        <dbReference type="ChEBI" id="CHEBI:60240"/>
        <label>2</label>
    </ligand>
</feature>
<feature type="binding site" evidence="1">
    <location>
        <position position="182"/>
    </location>
    <ligand>
        <name>a divalent metal cation</name>
        <dbReference type="ChEBI" id="CHEBI:60240"/>
        <label>3</label>
    </ligand>
</feature>
<feature type="binding site" evidence="1">
    <location>
        <position position="186"/>
    </location>
    <ligand>
        <name>a divalent metal cation</name>
        <dbReference type="ChEBI" id="CHEBI:60240"/>
        <label>1</label>
    </ligand>
</feature>
<feature type="binding site" evidence="1">
    <location>
        <position position="186"/>
    </location>
    <ligand>
        <name>a divalent metal cation</name>
        <dbReference type="ChEBI" id="CHEBI:60240"/>
        <label>3</label>
    </ligand>
</feature>
<feature type="binding site" evidence="1">
    <location>
        <begin position="200"/>
        <end position="207"/>
    </location>
    <ligand>
        <name>substrate</name>
    </ligand>
</feature>
<feature type="binding site" evidence="1">
    <location>
        <position position="227"/>
    </location>
    <ligand>
        <name>a divalent metal cation</name>
        <dbReference type="ChEBI" id="CHEBI:60240"/>
        <label>1</label>
    </ligand>
</feature>
<feature type="binding site" evidence="1">
    <location>
        <position position="227"/>
    </location>
    <ligand>
        <name>a divalent metal cation</name>
        <dbReference type="ChEBI" id="CHEBI:60240"/>
        <label>3</label>
    </ligand>
</feature>
<feature type="binding site" evidence="1">
    <location>
        <position position="250"/>
    </location>
    <ligand>
        <name>substrate</name>
    </ligand>
</feature>